<protein>
    <recommendedName>
        <fullName>THUMP domain-containing protein 1 homolog</fullName>
    </recommendedName>
</protein>
<reference key="1">
    <citation type="journal article" date="2000" name="Science">
        <title>The genome sequence of Drosophila melanogaster.</title>
        <authorList>
            <person name="Adams M.D."/>
            <person name="Celniker S.E."/>
            <person name="Holt R.A."/>
            <person name="Evans C.A."/>
            <person name="Gocayne J.D."/>
            <person name="Amanatides P.G."/>
            <person name="Scherer S.E."/>
            <person name="Li P.W."/>
            <person name="Hoskins R.A."/>
            <person name="Galle R.F."/>
            <person name="George R.A."/>
            <person name="Lewis S.E."/>
            <person name="Richards S."/>
            <person name="Ashburner M."/>
            <person name="Henderson S.N."/>
            <person name="Sutton G.G."/>
            <person name="Wortman J.R."/>
            <person name="Yandell M.D."/>
            <person name="Zhang Q."/>
            <person name="Chen L.X."/>
            <person name="Brandon R.C."/>
            <person name="Rogers Y.-H.C."/>
            <person name="Blazej R.G."/>
            <person name="Champe M."/>
            <person name="Pfeiffer B.D."/>
            <person name="Wan K.H."/>
            <person name="Doyle C."/>
            <person name="Baxter E.G."/>
            <person name="Helt G."/>
            <person name="Nelson C.R."/>
            <person name="Miklos G.L.G."/>
            <person name="Abril J.F."/>
            <person name="Agbayani A."/>
            <person name="An H.-J."/>
            <person name="Andrews-Pfannkoch C."/>
            <person name="Baldwin D."/>
            <person name="Ballew R.M."/>
            <person name="Basu A."/>
            <person name="Baxendale J."/>
            <person name="Bayraktaroglu L."/>
            <person name="Beasley E.M."/>
            <person name="Beeson K.Y."/>
            <person name="Benos P.V."/>
            <person name="Berman B.P."/>
            <person name="Bhandari D."/>
            <person name="Bolshakov S."/>
            <person name="Borkova D."/>
            <person name="Botchan M.R."/>
            <person name="Bouck J."/>
            <person name="Brokstein P."/>
            <person name="Brottier P."/>
            <person name="Burtis K.C."/>
            <person name="Busam D.A."/>
            <person name="Butler H."/>
            <person name="Cadieu E."/>
            <person name="Center A."/>
            <person name="Chandra I."/>
            <person name="Cherry J.M."/>
            <person name="Cawley S."/>
            <person name="Dahlke C."/>
            <person name="Davenport L.B."/>
            <person name="Davies P."/>
            <person name="de Pablos B."/>
            <person name="Delcher A."/>
            <person name="Deng Z."/>
            <person name="Mays A.D."/>
            <person name="Dew I."/>
            <person name="Dietz S.M."/>
            <person name="Dodson K."/>
            <person name="Doup L.E."/>
            <person name="Downes M."/>
            <person name="Dugan-Rocha S."/>
            <person name="Dunkov B.C."/>
            <person name="Dunn P."/>
            <person name="Durbin K.J."/>
            <person name="Evangelista C.C."/>
            <person name="Ferraz C."/>
            <person name="Ferriera S."/>
            <person name="Fleischmann W."/>
            <person name="Fosler C."/>
            <person name="Gabrielian A.E."/>
            <person name="Garg N.S."/>
            <person name="Gelbart W.M."/>
            <person name="Glasser K."/>
            <person name="Glodek A."/>
            <person name="Gong F."/>
            <person name="Gorrell J.H."/>
            <person name="Gu Z."/>
            <person name="Guan P."/>
            <person name="Harris M."/>
            <person name="Harris N.L."/>
            <person name="Harvey D.A."/>
            <person name="Heiman T.J."/>
            <person name="Hernandez J.R."/>
            <person name="Houck J."/>
            <person name="Hostin D."/>
            <person name="Houston K.A."/>
            <person name="Howland T.J."/>
            <person name="Wei M.-H."/>
            <person name="Ibegwam C."/>
            <person name="Jalali M."/>
            <person name="Kalush F."/>
            <person name="Karpen G.H."/>
            <person name="Ke Z."/>
            <person name="Kennison J.A."/>
            <person name="Ketchum K.A."/>
            <person name="Kimmel B.E."/>
            <person name="Kodira C.D."/>
            <person name="Kraft C.L."/>
            <person name="Kravitz S."/>
            <person name="Kulp D."/>
            <person name="Lai Z."/>
            <person name="Lasko P."/>
            <person name="Lei Y."/>
            <person name="Levitsky A.A."/>
            <person name="Li J.H."/>
            <person name="Li Z."/>
            <person name="Liang Y."/>
            <person name="Lin X."/>
            <person name="Liu X."/>
            <person name="Mattei B."/>
            <person name="McIntosh T.C."/>
            <person name="McLeod M.P."/>
            <person name="McPherson D."/>
            <person name="Merkulov G."/>
            <person name="Milshina N.V."/>
            <person name="Mobarry C."/>
            <person name="Morris J."/>
            <person name="Moshrefi A."/>
            <person name="Mount S.M."/>
            <person name="Moy M."/>
            <person name="Murphy B."/>
            <person name="Murphy L."/>
            <person name="Muzny D.M."/>
            <person name="Nelson D.L."/>
            <person name="Nelson D.R."/>
            <person name="Nelson K.A."/>
            <person name="Nixon K."/>
            <person name="Nusskern D.R."/>
            <person name="Pacleb J.M."/>
            <person name="Palazzolo M."/>
            <person name="Pittman G.S."/>
            <person name="Pan S."/>
            <person name="Pollard J."/>
            <person name="Puri V."/>
            <person name="Reese M.G."/>
            <person name="Reinert K."/>
            <person name="Remington K."/>
            <person name="Saunders R.D.C."/>
            <person name="Scheeler F."/>
            <person name="Shen H."/>
            <person name="Shue B.C."/>
            <person name="Siden-Kiamos I."/>
            <person name="Simpson M."/>
            <person name="Skupski M.P."/>
            <person name="Smith T.J."/>
            <person name="Spier E."/>
            <person name="Spradling A.C."/>
            <person name="Stapleton M."/>
            <person name="Strong R."/>
            <person name="Sun E."/>
            <person name="Svirskas R."/>
            <person name="Tector C."/>
            <person name="Turner R."/>
            <person name="Venter E."/>
            <person name="Wang A.H."/>
            <person name="Wang X."/>
            <person name="Wang Z.-Y."/>
            <person name="Wassarman D.A."/>
            <person name="Weinstock G.M."/>
            <person name="Weissenbach J."/>
            <person name="Williams S.M."/>
            <person name="Woodage T."/>
            <person name="Worley K.C."/>
            <person name="Wu D."/>
            <person name="Yang S."/>
            <person name="Yao Q.A."/>
            <person name="Ye J."/>
            <person name="Yeh R.-F."/>
            <person name="Zaveri J.S."/>
            <person name="Zhan M."/>
            <person name="Zhang G."/>
            <person name="Zhao Q."/>
            <person name="Zheng L."/>
            <person name="Zheng X.H."/>
            <person name="Zhong F.N."/>
            <person name="Zhong W."/>
            <person name="Zhou X."/>
            <person name="Zhu S.C."/>
            <person name="Zhu X."/>
            <person name="Smith H.O."/>
            <person name="Gibbs R.A."/>
            <person name="Myers E.W."/>
            <person name="Rubin G.M."/>
            <person name="Venter J.C."/>
        </authorList>
    </citation>
    <scope>NUCLEOTIDE SEQUENCE [LARGE SCALE GENOMIC DNA]</scope>
    <source>
        <strain>Berkeley</strain>
    </source>
</reference>
<reference key="2">
    <citation type="journal article" date="2002" name="Genome Biol.">
        <title>Annotation of the Drosophila melanogaster euchromatic genome: a systematic review.</title>
        <authorList>
            <person name="Misra S."/>
            <person name="Crosby M.A."/>
            <person name="Mungall C.J."/>
            <person name="Matthews B.B."/>
            <person name="Campbell K.S."/>
            <person name="Hradecky P."/>
            <person name="Huang Y."/>
            <person name="Kaminker J.S."/>
            <person name="Millburn G.H."/>
            <person name="Prochnik S.E."/>
            <person name="Smith C.D."/>
            <person name="Tupy J.L."/>
            <person name="Whitfield E.J."/>
            <person name="Bayraktaroglu L."/>
            <person name="Berman B.P."/>
            <person name="Bettencourt B.R."/>
            <person name="Celniker S.E."/>
            <person name="de Grey A.D.N.J."/>
            <person name="Drysdale R.A."/>
            <person name="Harris N.L."/>
            <person name="Richter J."/>
            <person name="Russo S."/>
            <person name="Schroeder A.J."/>
            <person name="Shu S.Q."/>
            <person name="Stapleton M."/>
            <person name="Yamada C."/>
            <person name="Ashburner M."/>
            <person name="Gelbart W.M."/>
            <person name="Rubin G.M."/>
            <person name="Lewis S.E."/>
        </authorList>
    </citation>
    <scope>GENOME REANNOTATION</scope>
    <source>
        <strain>Berkeley</strain>
    </source>
</reference>
<reference key="3">
    <citation type="journal article" date="2002" name="Genome Biol.">
        <title>A Drosophila full-length cDNA resource.</title>
        <authorList>
            <person name="Stapleton M."/>
            <person name="Carlson J.W."/>
            <person name="Brokstein P."/>
            <person name="Yu C."/>
            <person name="Champe M."/>
            <person name="George R.A."/>
            <person name="Guarin H."/>
            <person name="Kronmiller B."/>
            <person name="Pacleb J.M."/>
            <person name="Park S."/>
            <person name="Wan K.H."/>
            <person name="Rubin G.M."/>
            <person name="Celniker S.E."/>
        </authorList>
    </citation>
    <scope>NUCLEOTIDE SEQUENCE [LARGE SCALE MRNA]</scope>
    <source>
        <strain>Berkeley</strain>
        <tissue>Ovary</tissue>
    </source>
</reference>
<reference key="4">
    <citation type="journal article" date="2007" name="Mol. Biosyst.">
        <title>An integrated chemical, mass spectrometric and computational strategy for (quantitative) phosphoproteomics: application to Drosophila melanogaster Kc167 cells.</title>
        <authorList>
            <person name="Bodenmiller B."/>
            <person name="Mueller L.N."/>
            <person name="Pedrioli P.G.A."/>
            <person name="Pflieger D."/>
            <person name="Juenger M.A."/>
            <person name="Eng J.K."/>
            <person name="Aebersold R."/>
            <person name="Tao W.A."/>
        </authorList>
    </citation>
    <scope>PHOSPHORYLATION [LARGE SCALE ANALYSIS] AT THR-99 AND SER-100</scope>
    <scope>IDENTIFICATION BY MASS SPECTROMETRY</scope>
</reference>
<reference key="5">
    <citation type="journal article" date="2008" name="J. Proteome Res.">
        <title>Phosphoproteome analysis of Drosophila melanogaster embryos.</title>
        <authorList>
            <person name="Zhai B."/>
            <person name="Villen J."/>
            <person name="Beausoleil S.A."/>
            <person name="Mintseris J."/>
            <person name="Gygi S.P."/>
        </authorList>
    </citation>
    <scope>PHOSPHORYLATION [LARGE SCALE ANALYSIS] AT THR-99 AND SER-100</scope>
    <scope>IDENTIFICATION BY MASS SPECTROMETRY</scope>
    <source>
        <tissue>Embryo</tissue>
    </source>
</reference>
<comment type="similarity">
    <text evidence="5">Belongs to the THUMPD1 family.</text>
</comment>
<organism>
    <name type="scientific">Drosophila melanogaster</name>
    <name type="common">Fruit fly</name>
    <dbReference type="NCBI Taxonomy" id="7227"/>
    <lineage>
        <taxon>Eukaryota</taxon>
        <taxon>Metazoa</taxon>
        <taxon>Ecdysozoa</taxon>
        <taxon>Arthropoda</taxon>
        <taxon>Hexapoda</taxon>
        <taxon>Insecta</taxon>
        <taxon>Pterygota</taxon>
        <taxon>Neoptera</taxon>
        <taxon>Endopterygota</taxon>
        <taxon>Diptera</taxon>
        <taxon>Brachycera</taxon>
        <taxon>Muscomorpha</taxon>
        <taxon>Ephydroidea</taxon>
        <taxon>Drosophilidae</taxon>
        <taxon>Drosophila</taxon>
        <taxon>Sophophora</taxon>
    </lineage>
</organism>
<sequence>MEPASKKSKMGKNVKFNNNKKKYFHAKRQTLQPGQRGFFATCNINEKACVRECYNLLNHYADILYGSEKPENEPEKKQPEEGAGGDAGEDDPKPAAGGTSDDDDDLEAAAAKCREMLSQRKMRFQNVDTNTTNCVFIRTQLEDPVALGKHIINDIATTGKSMSRFVLRLVPIEVVCRANMPDIITAAGELFDKHFLKEPTSYGIIFNHRYNQQIKRDQIITQLAELVNSKNVGNKVDLKEAKKSIIVEVLRGWCLLSVIDNYLECKKFNLAELANPSDKKSSGEGDSKSETSEVANGNDKEQAESSEESKSNDDENKDSTENDK</sequence>
<proteinExistence type="evidence at protein level"/>
<accession>Q9VZD8</accession>
<feature type="chain" id="PRO_0000349131" description="THUMP domain-containing protein 1 homolog">
    <location>
        <begin position="1"/>
        <end position="324"/>
    </location>
</feature>
<feature type="domain" description="THUMP" evidence="1">
    <location>
        <begin position="154"/>
        <end position="260"/>
    </location>
</feature>
<feature type="region of interest" description="Disordered" evidence="2">
    <location>
        <begin position="1"/>
        <end position="24"/>
    </location>
</feature>
<feature type="region of interest" description="Disordered" evidence="2">
    <location>
        <begin position="67"/>
        <end position="104"/>
    </location>
</feature>
<feature type="region of interest" description="Disordered" evidence="2">
    <location>
        <begin position="275"/>
        <end position="324"/>
    </location>
</feature>
<feature type="compositionally biased region" description="Basic and acidic residues" evidence="2">
    <location>
        <begin position="68"/>
        <end position="80"/>
    </location>
</feature>
<feature type="compositionally biased region" description="Basic and acidic residues" evidence="2">
    <location>
        <begin position="277"/>
        <end position="291"/>
    </location>
</feature>
<feature type="compositionally biased region" description="Basic and acidic residues" evidence="2">
    <location>
        <begin position="298"/>
        <end position="324"/>
    </location>
</feature>
<feature type="modified residue" description="Phosphothreonine" evidence="3 4">
    <location>
        <position position="99"/>
    </location>
</feature>
<feature type="modified residue" description="Phosphoserine" evidence="3 4">
    <location>
        <position position="100"/>
    </location>
</feature>
<dbReference type="EMBL" id="AE014296">
    <property type="protein sequence ID" value="AAF47886.2"/>
    <property type="molecule type" value="Genomic_DNA"/>
</dbReference>
<dbReference type="EMBL" id="AY118476">
    <property type="protein sequence ID" value="AAM49845.1"/>
    <property type="molecule type" value="mRNA"/>
</dbReference>
<dbReference type="RefSeq" id="NP_647892.1">
    <property type="nucleotide sequence ID" value="NM_139635.2"/>
</dbReference>
<dbReference type="FunCoup" id="Q9VZD8">
    <property type="interactions" value="2380"/>
</dbReference>
<dbReference type="IntAct" id="Q9VZD8">
    <property type="interactions" value="88"/>
</dbReference>
<dbReference type="STRING" id="7227.FBpp0073196"/>
<dbReference type="iPTMnet" id="Q9VZD8"/>
<dbReference type="PaxDb" id="7227-FBpp0073196"/>
<dbReference type="DNASU" id="38533"/>
<dbReference type="EnsemblMetazoa" id="FBtr0073340">
    <property type="protein sequence ID" value="FBpp0073196"/>
    <property type="gene ID" value="FBgn0035532"/>
</dbReference>
<dbReference type="GeneID" id="38533"/>
<dbReference type="KEGG" id="dme:Dmel_CG15014"/>
<dbReference type="UCSC" id="CG15014-RA">
    <property type="organism name" value="d. melanogaster"/>
</dbReference>
<dbReference type="AGR" id="FB:FBgn0035532"/>
<dbReference type="FlyBase" id="FBgn0035532">
    <property type="gene designation" value="CG15014"/>
</dbReference>
<dbReference type="VEuPathDB" id="VectorBase:FBgn0035532"/>
<dbReference type="eggNOG" id="KOG3943">
    <property type="taxonomic scope" value="Eukaryota"/>
</dbReference>
<dbReference type="GeneTree" id="ENSGT00390000002365"/>
<dbReference type="HOGENOM" id="CLU_039352_0_1_1"/>
<dbReference type="InParanoid" id="Q9VZD8"/>
<dbReference type="OMA" id="KRFCDQA"/>
<dbReference type="OrthoDB" id="367221at2759"/>
<dbReference type="PhylomeDB" id="Q9VZD8"/>
<dbReference type="BioGRID-ORCS" id="38533">
    <property type="hits" value="0 hits in 1 CRISPR screen"/>
</dbReference>
<dbReference type="GenomeRNAi" id="38533"/>
<dbReference type="PRO" id="PR:Q9VZD8"/>
<dbReference type="Proteomes" id="UP000000803">
    <property type="component" value="Chromosome 3L"/>
</dbReference>
<dbReference type="Bgee" id="FBgn0035532">
    <property type="expression patterns" value="Expressed in spermatocyte in testis and 55 other cell types or tissues"/>
</dbReference>
<dbReference type="GO" id="GO:0003723">
    <property type="term" value="F:RNA binding"/>
    <property type="evidence" value="ECO:0000318"/>
    <property type="project" value="GO_Central"/>
</dbReference>
<dbReference type="GO" id="GO:0006400">
    <property type="term" value="P:tRNA modification"/>
    <property type="evidence" value="ECO:0000318"/>
    <property type="project" value="GO_Central"/>
</dbReference>
<dbReference type="CDD" id="cd11717">
    <property type="entry name" value="THUMP_THUMPD1_like"/>
    <property type="match status" value="1"/>
</dbReference>
<dbReference type="FunFam" id="3.30.2300.10:FF:000001">
    <property type="entry name" value="THUMP domain-containing protein 1"/>
    <property type="match status" value="1"/>
</dbReference>
<dbReference type="Gene3D" id="3.30.2300.10">
    <property type="entry name" value="THUMP superfamily"/>
    <property type="match status" value="1"/>
</dbReference>
<dbReference type="InterPro" id="IPR004114">
    <property type="entry name" value="THUMP_dom"/>
</dbReference>
<dbReference type="InterPro" id="IPR040183">
    <property type="entry name" value="THUMPD1-like"/>
</dbReference>
<dbReference type="PANTHER" id="PTHR13452">
    <property type="entry name" value="THUMP DOMAIN CONTAINING PROTEIN 1-RELATED"/>
    <property type="match status" value="1"/>
</dbReference>
<dbReference type="PANTHER" id="PTHR13452:SF10">
    <property type="entry name" value="THUMP DOMAIN-CONTAINING PROTEIN 1"/>
    <property type="match status" value="1"/>
</dbReference>
<dbReference type="Pfam" id="PF02926">
    <property type="entry name" value="THUMP"/>
    <property type="match status" value="1"/>
</dbReference>
<dbReference type="SMART" id="SM00981">
    <property type="entry name" value="THUMP"/>
    <property type="match status" value="1"/>
</dbReference>
<dbReference type="SUPFAM" id="SSF143437">
    <property type="entry name" value="THUMP domain-like"/>
    <property type="match status" value="1"/>
</dbReference>
<dbReference type="PROSITE" id="PS51165">
    <property type="entry name" value="THUMP"/>
    <property type="match status" value="1"/>
</dbReference>
<name>THUM1_DROME</name>
<keyword id="KW-0597">Phosphoprotein</keyword>
<keyword id="KW-1185">Reference proteome</keyword>
<keyword id="KW-0694">RNA-binding</keyword>
<evidence type="ECO:0000255" key="1">
    <source>
        <dbReference type="PROSITE-ProRule" id="PRU00529"/>
    </source>
</evidence>
<evidence type="ECO:0000256" key="2">
    <source>
        <dbReference type="SAM" id="MobiDB-lite"/>
    </source>
</evidence>
<evidence type="ECO:0000269" key="3">
    <source>
    </source>
</evidence>
<evidence type="ECO:0000269" key="4">
    <source>
    </source>
</evidence>
<evidence type="ECO:0000305" key="5"/>
<gene>
    <name type="ORF">CG15014</name>
</gene>